<accession>Q9V0V5</accession>
<accession>G8ZJE7</accession>
<protein>
    <recommendedName>
        <fullName evidence="1">Transcription initiation factor IIB</fullName>
        <shortName evidence="1">TFIIB</shortName>
    </recommendedName>
</protein>
<comment type="function">
    <text evidence="1">Stabilizes TBP binding to an archaeal box-A promoter. Also responsible for recruiting RNA polymerase II to the pre-initiation complex (DNA-TBP-TFIIB).</text>
</comment>
<comment type="similarity">
    <text evidence="1">Belongs to the TFIIB family.</text>
</comment>
<organism>
    <name type="scientific">Pyrococcus abyssi (strain GE5 / Orsay)</name>
    <dbReference type="NCBI Taxonomy" id="272844"/>
    <lineage>
        <taxon>Archaea</taxon>
        <taxon>Methanobacteriati</taxon>
        <taxon>Methanobacteriota</taxon>
        <taxon>Thermococci</taxon>
        <taxon>Thermococcales</taxon>
        <taxon>Thermococcaceae</taxon>
        <taxon>Pyrococcus</taxon>
    </lineage>
</organism>
<evidence type="ECO:0000255" key="1">
    <source>
        <dbReference type="HAMAP-Rule" id="MF_00383"/>
    </source>
</evidence>
<evidence type="ECO:0000255" key="2">
    <source>
        <dbReference type="PROSITE-ProRule" id="PRU00469"/>
    </source>
</evidence>
<dbReference type="EMBL" id="AJ248285">
    <property type="protein sequence ID" value="CAB49598.1"/>
    <property type="molecule type" value="Genomic_DNA"/>
</dbReference>
<dbReference type="EMBL" id="HE613800">
    <property type="protein sequence ID" value="CCE70074.1"/>
    <property type="molecule type" value="Genomic_DNA"/>
</dbReference>
<dbReference type="PIR" id="E75110">
    <property type="entry name" value="E75110"/>
</dbReference>
<dbReference type="RefSeq" id="WP_010867803.1">
    <property type="nucleotide sequence ID" value="NC_000868.1"/>
</dbReference>
<dbReference type="SMR" id="Q9V0V5"/>
<dbReference type="STRING" id="272844.PAB1912"/>
<dbReference type="KEGG" id="pab:PAB1912"/>
<dbReference type="PATRIC" id="fig|272844.11.peg.719"/>
<dbReference type="eggNOG" id="arCOG01981">
    <property type="taxonomic scope" value="Archaea"/>
</dbReference>
<dbReference type="HOGENOM" id="CLU_043736_0_1_2"/>
<dbReference type="OrthoDB" id="7429at2157"/>
<dbReference type="PhylomeDB" id="Q9V0V5"/>
<dbReference type="Proteomes" id="UP000000810">
    <property type="component" value="Chromosome"/>
</dbReference>
<dbReference type="Proteomes" id="UP000009139">
    <property type="component" value="Chromosome"/>
</dbReference>
<dbReference type="GO" id="GO:0097550">
    <property type="term" value="C:transcription preinitiation complex"/>
    <property type="evidence" value="ECO:0007669"/>
    <property type="project" value="TreeGrafter"/>
</dbReference>
<dbReference type="GO" id="GO:0003700">
    <property type="term" value="F:DNA-binding transcription factor activity"/>
    <property type="evidence" value="ECO:0007669"/>
    <property type="project" value="UniProtKB-UniRule"/>
</dbReference>
<dbReference type="GO" id="GO:0017025">
    <property type="term" value="F:TBP-class protein binding"/>
    <property type="evidence" value="ECO:0007669"/>
    <property type="project" value="InterPro"/>
</dbReference>
<dbReference type="GO" id="GO:0008270">
    <property type="term" value="F:zinc ion binding"/>
    <property type="evidence" value="ECO:0007669"/>
    <property type="project" value="UniProtKB-UniRule"/>
</dbReference>
<dbReference type="GO" id="GO:0070897">
    <property type="term" value="P:transcription preinitiation complex assembly"/>
    <property type="evidence" value="ECO:0007669"/>
    <property type="project" value="InterPro"/>
</dbReference>
<dbReference type="CDD" id="cd20549">
    <property type="entry name" value="CYCLIN_TFIIB_archaea_like_rpt1"/>
    <property type="match status" value="1"/>
</dbReference>
<dbReference type="CDD" id="cd20550">
    <property type="entry name" value="CYCLIN_TFIIB_archaea_like_rpt2"/>
    <property type="match status" value="1"/>
</dbReference>
<dbReference type="CDD" id="cd00350">
    <property type="entry name" value="rubredoxin_like"/>
    <property type="match status" value="1"/>
</dbReference>
<dbReference type="FunFam" id="1.10.472.10:FF:000023">
    <property type="entry name" value="Transcription initiation factor IIB"/>
    <property type="match status" value="1"/>
</dbReference>
<dbReference type="FunFam" id="1.10.472.170:FF:000001">
    <property type="entry name" value="Transcription initiation factor IIB"/>
    <property type="match status" value="1"/>
</dbReference>
<dbReference type="Gene3D" id="1.10.472.170">
    <property type="match status" value="1"/>
</dbReference>
<dbReference type="Gene3D" id="1.10.472.10">
    <property type="entry name" value="Cyclin-like"/>
    <property type="match status" value="1"/>
</dbReference>
<dbReference type="HAMAP" id="MF_00383">
    <property type="entry name" value="TF2B_arch"/>
    <property type="match status" value="1"/>
</dbReference>
<dbReference type="InterPro" id="IPR013763">
    <property type="entry name" value="Cyclin-like_dom"/>
</dbReference>
<dbReference type="InterPro" id="IPR036915">
    <property type="entry name" value="Cyclin-like_sf"/>
</dbReference>
<dbReference type="InterPro" id="IPR000812">
    <property type="entry name" value="TFIIB"/>
</dbReference>
<dbReference type="InterPro" id="IPR023484">
    <property type="entry name" value="TFIIB_arc"/>
</dbReference>
<dbReference type="InterPro" id="IPR023486">
    <property type="entry name" value="TFIIB_CS"/>
</dbReference>
<dbReference type="InterPro" id="IPR013150">
    <property type="entry name" value="TFIIB_cyclin"/>
</dbReference>
<dbReference type="InterPro" id="IPR013137">
    <property type="entry name" value="Znf_TFIIB"/>
</dbReference>
<dbReference type="NCBIfam" id="NF001658">
    <property type="entry name" value="PRK00423.1"/>
    <property type="match status" value="1"/>
</dbReference>
<dbReference type="PANTHER" id="PTHR11618:SF13">
    <property type="entry name" value="TRANSCRIPTION INITIATION FACTOR IIB"/>
    <property type="match status" value="1"/>
</dbReference>
<dbReference type="PANTHER" id="PTHR11618">
    <property type="entry name" value="TRANSCRIPTION INITIATION FACTOR IIB-RELATED"/>
    <property type="match status" value="1"/>
</dbReference>
<dbReference type="Pfam" id="PF00382">
    <property type="entry name" value="TFIIB"/>
    <property type="match status" value="2"/>
</dbReference>
<dbReference type="Pfam" id="PF08271">
    <property type="entry name" value="Zn_Ribbon_TF"/>
    <property type="match status" value="1"/>
</dbReference>
<dbReference type="PRINTS" id="PR00685">
    <property type="entry name" value="TIFACTORIIB"/>
</dbReference>
<dbReference type="SMART" id="SM00385">
    <property type="entry name" value="CYCLIN"/>
    <property type="match status" value="2"/>
</dbReference>
<dbReference type="SUPFAM" id="SSF47954">
    <property type="entry name" value="Cyclin-like"/>
    <property type="match status" value="2"/>
</dbReference>
<dbReference type="SUPFAM" id="SSF57783">
    <property type="entry name" value="Zinc beta-ribbon"/>
    <property type="match status" value="1"/>
</dbReference>
<dbReference type="PROSITE" id="PS00782">
    <property type="entry name" value="TFIIB"/>
    <property type="match status" value="2"/>
</dbReference>
<dbReference type="PROSITE" id="PS51134">
    <property type="entry name" value="ZF_TFIIB"/>
    <property type="match status" value="1"/>
</dbReference>
<reference key="1">
    <citation type="journal article" date="2003" name="Mol. Microbiol.">
        <title>An integrated analysis of the genome of the hyperthermophilic archaeon Pyrococcus abyssi.</title>
        <authorList>
            <person name="Cohen G.N."/>
            <person name="Barbe V."/>
            <person name="Flament D."/>
            <person name="Galperin M."/>
            <person name="Heilig R."/>
            <person name="Lecompte O."/>
            <person name="Poch O."/>
            <person name="Prieur D."/>
            <person name="Querellou J."/>
            <person name="Ripp R."/>
            <person name="Thierry J.-C."/>
            <person name="Van der Oost J."/>
            <person name="Weissenbach J."/>
            <person name="Zivanovic Y."/>
            <person name="Forterre P."/>
        </authorList>
    </citation>
    <scope>NUCLEOTIDE SEQUENCE [LARGE SCALE GENOMIC DNA]</scope>
    <source>
        <strain>GE5 / Orsay</strain>
    </source>
</reference>
<reference key="2">
    <citation type="journal article" date="2012" name="Curr. Microbiol.">
        <title>Re-annotation of two hyperthermophilic archaea Pyrococcus abyssi GE5 and Pyrococcus furiosus DSM 3638.</title>
        <authorList>
            <person name="Gao J."/>
            <person name="Wang J."/>
        </authorList>
    </citation>
    <scope>GENOME REANNOTATION</scope>
    <source>
        <strain>GE5 / Orsay</strain>
    </source>
</reference>
<sequence>MTKQRVCPVCGSTEFIYDPERGEIVCARCGYVIEENIVDMGPEWRAFDASQREKRSRTGAPESILLHDKGLSTDIGIDRSLTGLMREKMYRLRKWQSRLRVSDAAERNLAFALSELDRITAQLKLPKHVEEEAARLYREAVRKGLIRGRSIESVIAACVYAACRLLKVPRTLDEISDIARVEKKEIGRSYRFIARNLNLTPKKLFVKPTDYVNKFADELGLSEKVRRRAIEILEEAYKRGLTSGKSPAGLVAAALYIASLLEGEKRTQREVAEVARVTEVTVRNRYKELVEKLGIKVPVT</sequence>
<name>TF2B_PYRAB</name>
<gene>
    <name evidence="1" type="primary">tfb</name>
    <name type="ordered locus">PYRAB06850</name>
    <name type="ORF">PAB1912</name>
</gene>
<keyword id="KW-0479">Metal-binding</keyword>
<keyword id="KW-0677">Repeat</keyword>
<keyword id="KW-0804">Transcription</keyword>
<keyword id="KW-0805">Transcription regulation</keyword>
<keyword id="KW-0862">Zinc</keyword>
<keyword id="KW-0863">Zinc-finger</keyword>
<proteinExistence type="inferred from homology"/>
<feature type="chain" id="PRO_0000119325" description="Transcription initiation factor IIB">
    <location>
        <begin position="1"/>
        <end position="300"/>
    </location>
</feature>
<feature type="repeat" description="1">
    <location>
        <begin position="114"/>
        <end position="197"/>
    </location>
</feature>
<feature type="repeat" description="2">
    <location>
        <begin position="210"/>
        <end position="291"/>
    </location>
</feature>
<feature type="zinc finger region" description="TFIIB-type" evidence="2">
    <location>
        <begin position="3"/>
        <end position="34"/>
    </location>
</feature>
<feature type="binding site" evidence="2">
    <location>
        <position position="7"/>
    </location>
    <ligand>
        <name>Zn(2+)</name>
        <dbReference type="ChEBI" id="CHEBI:29105"/>
    </ligand>
</feature>
<feature type="binding site" evidence="2">
    <location>
        <position position="10"/>
    </location>
    <ligand>
        <name>Zn(2+)</name>
        <dbReference type="ChEBI" id="CHEBI:29105"/>
    </ligand>
</feature>
<feature type="binding site" evidence="2">
    <location>
        <position position="26"/>
    </location>
    <ligand>
        <name>Zn(2+)</name>
        <dbReference type="ChEBI" id="CHEBI:29105"/>
    </ligand>
</feature>
<feature type="binding site" evidence="2">
    <location>
        <position position="29"/>
    </location>
    <ligand>
        <name>Zn(2+)</name>
        <dbReference type="ChEBI" id="CHEBI:29105"/>
    </ligand>
</feature>